<keyword id="KW-1185">Reference proteome</keyword>
<keyword id="KW-0687">Ribonucleoprotein</keyword>
<keyword id="KW-0689">Ribosomal protein</keyword>
<keyword id="KW-0694">RNA-binding</keyword>
<keyword id="KW-0699">rRNA-binding</keyword>
<sequence length="96" mass="10919">MRSQKKGPFIDTHVLAKIEDMNNRNEKKVVRTWSRRSTIIPEMVGHTLAVHNGKKFIPVYVTENMVGHKLGEFSFTRQFKGHSVKAATETAAKPAR</sequence>
<gene>
    <name evidence="1" type="primary">rpsS</name>
    <name type="ordered locus">Acid345_1230</name>
</gene>
<accession>Q1ISB8</accession>
<comment type="function">
    <text evidence="1">Protein S19 forms a complex with S13 that binds strongly to the 16S ribosomal RNA.</text>
</comment>
<comment type="similarity">
    <text evidence="1">Belongs to the universal ribosomal protein uS19 family.</text>
</comment>
<name>RS19_KORVE</name>
<protein>
    <recommendedName>
        <fullName evidence="1">Small ribosomal subunit protein uS19</fullName>
    </recommendedName>
    <alternativeName>
        <fullName evidence="2">30S ribosomal protein S19</fullName>
    </alternativeName>
</protein>
<organism>
    <name type="scientific">Koribacter versatilis (strain Ellin345)</name>
    <dbReference type="NCBI Taxonomy" id="204669"/>
    <lineage>
        <taxon>Bacteria</taxon>
        <taxon>Pseudomonadati</taxon>
        <taxon>Acidobacteriota</taxon>
        <taxon>Terriglobia</taxon>
        <taxon>Terriglobales</taxon>
        <taxon>Candidatus Korobacteraceae</taxon>
        <taxon>Candidatus Korobacter</taxon>
    </lineage>
</organism>
<evidence type="ECO:0000255" key="1">
    <source>
        <dbReference type="HAMAP-Rule" id="MF_00531"/>
    </source>
</evidence>
<evidence type="ECO:0000305" key="2"/>
<proteinExistence type="inferred from homology"/>
<reference key="1">
    <citation type="journal article" date="2009" name="Appl. Environ. Microbiol.">
        <title>Three genomes from the phylum Acidobacteria provide insight into the lifestyles of these microorganisms in soils.</title>
        <authorList>
            <person name="Ward N.L."/>
            <person name="Challacombe J.F."/>
            <person name="Janssen P.H."/>
            <person name="Henrissat B."/>
            <person name="Coutinho P.M."/>
            <person name="Wu M."/>
            <person name="Xie G."/>
            <person name="Haft D.H."/>
            <person name="Sait M."/>
            <person name="Badger J."/>
            <person name="Barabote R.D."/>
            <person name="Bradley B."/>
            <person name="Brettin T.S."/>
            <person name="Brinkac L.M."/>
            <person name="Bruce D."/>
            <person name="Creasy T."/>
            <person name="Daugherty S.C."/>
            <person name="Davidsen T.M."/>
            <person name="DeBoy R.T."/>
            <person name="Detter J.C."/>
            <person name="Dodson R.J."/>
            <person name="Durkin A.S."/>
            <person name="Ganapathy A."/>
            <person name="Gwinn-Giglio M."/>
            <person name="Han C.S."/>
            <person name="Khouri H."/>
            <person name="Kiss H."/>
            <person name="Kothari S.P."/>
            <person name="Madupu R."/>
            <person name="Nelson K.E."/>
            <person name="Nelson W.C."/>
            <person name="Paulsen I."/>
            <person name="Penn K."/>
            <person name="Ren Q."/>
            <person name="Rosovitz M.J."/>
            <person name="Selengut J.D."/>
            <person name="Shrivastava S."/>
            <person name="Sullivan S.A."/>
            <person name="Tapia R."/>
            <person name="Thompson L.S."/>
            <person name="Watkins K.L."/>
            <person name="Yang Q."/>
            <person name="Yu C."/>
            <person name="Zafar N."/>
            <person name="Zhou L."/>
            <person name="Kuske C.R."/>
        </authorList>
    </citation>
    <scope>NUCLEOTIDE SEQUENCE [LARGE SCALE GENOMIC DNA]</scope>
    <source>
        <strain>Ellin345</strain>
    </source>
</reference>
<feature type="chain" id="PRO_0000265320" description="Small ribosomal subunit protein uS19">
    <location>
        <begin position="1"/>
        <end position="96"/>
    </location>
</feature>
<dbReference type="EMBL" id="CP000360">
    <property type="protein sequence ID" value="ABF40232.1"/>
    <property type="molecule type" value="Genomic_DNA"/>
</dbReference>
<dbReference type="RefSeq" id="WP_011522034.1">
    <property type="nucleotide sequence ID" value="NC_008009.1"/>
</dbReference>
<dbReference type="SMR" id="Q1ISB8"/>
<dbReference type="STRING" id="204669.Acid345_1230"/>
<dbReference type="EnsemblBacteria" id="ABF40232">
    <property type="protein sequence ID" value="ABF40232"/>
    <property type="gene ID" value="Acid345_1230"/>
</dbReference>
<dbReference type="KEGG" id="aba:Acid345_1230"/>
<dbReference type="eggNOG" id="COG0185">
    <property type="taxonomic scope" value="Bacteria"/>
</dbReference>
<dbReference type="HOGENOM" id="CLU_144911_0_1_0"/>
<dbReference type="OrthoDB" id="9797833at2"/>
<dbReference type="Proteomes" id="UP000002432">
    <property type="component" value="Chromosome"/>
</dbReference>
<dbReference type="GO" id="GO:0005737">
    <property type="term" value="C:cytoplasm"/>
    <property type="evidence" value="ECO:0007669"/>
    <property type="project" value="UniProtKB-ARBA"/>
</dbReference>
<dbReference type="GO" id="GO:0015935">
    <property type="term" value="C:small ribosomal subunit"/>
    <property type="evidence" value="ECO:0007669"/>
    <property type="project" value="InterPro"/>
</dbReference>
<dbReference type="GO" id="GO:0019843">
    <property type="term" value="F:rRNA binding"/>
    <property type="evidence" value="ECO:0007669"/>
    <property type="project" value="UniProtKB-UniRule"/>
</dbReference>
<dbReference type="GO" id="GO:0003735">
    <property type="term" value="F:structural constituent of ribosome"/>
    <property type="evidence" value="ECO:0007669"/>
    <property type="project" value="InterPro"/>
</dbReference>
<dbReference type="GO" id="GO:0000028">
    <property type="term" value="P:ribosomal small subunit assembly"/>
    <property type="evidence" value="ECO:0007669"/>
    <property type="project" value="TreeGrafter"/>
</dbReference>
<dbReference type="GO" id="GO:0006412">
    <property type="term" value="P:translation"/>
    <property type="evidence" value="ECO:0007669"/>
    <property type="project" value="UniProtKB-UniRule"/>
</dbReference>
<dbReference type="FunFam" id="3.30.860.10:FF:000001">
    <property type="entry name" value="30S ribosomal protein S19"/>
    <property type="match status" value="1"/>
</dbReference>
<dbReference type="Gene3D" id="3.30.860.10">
    <property type="entry name" value="30s Ribosomal Protein S19, Chain A"/>
    <property type="match status" value="1"/>
</dbReference>
<dbReference type="HAMAP" id="MF_00531">
    <property type="entry name" value="Ribosomal_uS19"/>
    <property type="match status" value="1"/>
</dbReference>
<dbReference type="InterPro" id="IPR002222">
    <property type="entry name" value="Ribosomal_uS19"/>
</dbReference>
<dbReference type="InterPro" id="IPR005732">
    <property type="entry name" value="Ribosomal_uS19_bac-type"/>
</dbReference>
<dbReference type="InterPro" id="IPR020934">
    <property type="entry name" value="Ribosomal_uS19_CS"/>
</dbReference>
<dbReference type="InterPro" id="IPR023575">
    <property type="entry name" value="Ribosomal_uS19_SF"/>
</dbReference>
<dbReference type="NCBIfam" id="TIGR01050">
    <property type="entry name" value="rpsS_bact"/>
    <property type="match status" value="1"/>
</dbReference>
<dbReference type="PANTHER" id="PTHR11880">
    <property type="entry name" value="RIBOSOMAL PROTEIN S19P FAMILY MEMBER"/>
    <property type="match status" value="1"/>
</dbReference>
<dbReference type="PANTHER" id="PTHR11880:SF8">
    <property type="entry name" value="SMALL RIBOSOMAL SUBUNIT PROTEIN US19M"/>
    <property type="match status" value="1"/>
</dbReference>
<dbReference type="Pfam" id="PF00203">
    <property type="entry name" value="Ribosomal_S19"/>
    <property type="match status" value="1"/>
</dbReference>
<dbReference type="PIRSF" id="PIRSF002144">
    <property type="entry name" value="Ribosomal_S19"/>
    <property type="match status" value="1"/>
</dbReference>
<dbReference type="PRINTS" id="PR00975">
    <property type="entry name" value="RIBOSOMALS19"/>
</dbReference>
<dbReference type="SUPFAM" id="SSF54570">
    <property type="entry name" value="Ribosomal protein S19"/>
    <property type="match status" value="1"/>
</dbReference>
<dbReference type="PROSITE" id="PS00323">
    <property type="entry name" value="RIBOSOMAL_S19"/>
    <property type="match status" value="1"/>
</dbReference>